<sequence>MTAAAVLAGHEGPAAAVSVPLLVKRLGRVDYAPAWEAMQHFTASRGEDTADEIWLLEHPPVYTLGQAGRPEHLLRNDAGIPLVKIDRGGQITYHGPGQLVAYLLLDLRRRHLKVRELVALMEQAVIDCLAEYGLHAERKDGAPGVYIDGAKIAALGLRVRNGCSYHGLALNVDADLAPFGWINPCGYEGLQTIRLKDFGVGDDVAAVGERLLQHLLRLLPPGVVPSR</sequence>
<gene>
    <name evidence="1" type="primary">lipB</name>
    <name type="ordered locus">azo0183</name>
</gene>
<feature type="chain" id="PRO_0000321625" description="Octanoyltransferase">
    <location>
        <begin position="1"/>
        <end position="227"/>
    </location>
</feature>
<feature type="domain" description="BPL/LPL catalytic" evidence="2">
    <location>
        <begin position="47"/>
        <end position="223"/>
    </location>
</feature>
<feature type="active site" description="Acyl-thioester intermediate" evidence="1">
    <location>
        <position position="185"/>
    </location>
</feature>
<feature type="binding site" evidence="1">
    <location>
        <begin position="87"/>
        <end position="94"/>
    </location>
    <ligand>
        <name>substrate</name>
    </ligand>
</feature>
<feature type="binding site" evidence="1">
    <location>
        <begin position="154"/>
        <end position="156"/>
    </location>
    <ligand>
        <name>substrate</name>
    </ligand>
</feature>
<feature type="binding site" evidence="1">
    <location>
        <begin position="167"/>
        <end position="169"/>
    </location>
    <ligand>
        <name>substrate</name>
    </ligand>
</feature>
<feature type="site" description="Lowers pKa of active site Cys" evidence="1">
    <location>
        <position position="151"/>
    </location>
</feature>
<proteinExistence type="inferred from homology"/>
<name>LIPB_AZOSB</name>
<dbReference type="EC" id="2.3.1.181" evidence="1"/>
<dbReference type="EMBL" id="AM406670">
    <property type="protein sequence ID" value="CAL92801.1"/>
    <property type="molecule type" value="Genomic_DNA"/>
</dbReference>
<dbReference type="RefSeq" id="WP_011763919.1">
    <property type="nucleotide sequence ID" value="NC_008702.1"/>
</dbReference>
<dbReference type="SMR" id="A1K1U6"/>
<dbReference type="STRING" id="62928.azo0183"/>
<dbReference type="KEGG" id="aoa:dqs_0192"/>
<dbReference type="KEGG" id="azo:azo0183"/>
<dbReference type="eggNOG" id="COG0321">
    <property type="taxonomic scope" value="Bacteria"/>
</dbReference>
<dbReference type="HOGENOM" id="CLU_035168_3_1_4"/>
<dbReference type="OrthoDB" id="9787061at2"/>
<dbReference type="UniPathway" id="UPA00538">
    <property type="reaction ID" value="UER00592"/>
</dbReference>
<dbReference type="Proteomes" id="UP000002588">
    <property type="component" value="Chromosome"/>
</dbReference>
<dbReference type="GO" id="GO:0005737">
    <property type="term" value="C:cytoplasm"/>
    <property type="evidence" value="ECO:0007669"/>
    <property type="project" value="UniProtKB-SubCell"/>
</dbReference>
<dbReference type="GO" id="GO:0033819">
    <property type="term" value="F:lipoyl(octanoyl) transferase activity"/>
    <property type="evidence" value="ECO:0007669"/>
    <property type="project" value="UniProtKB-EC"/>
</dbReference>
<dbReference type="GO" id="GO:0036211">
    <property type="term" value="P:protein modification process"/>
    <property type="evidence" value="ECO:0007669"/>
    <property type="project" value="InterPro"/>
</dbReference>
<dbReference type="CDD" id="cd16444">
    <property type="entry name" value="LipB"/>
    <property type="match status" value="1"/>
</dbReference>
<dbReference type="FunFam" id="3.30.930.10:FF:000020">
    <property type="entry name" value="Octanoyltransferase"/>
    <property type="match status" value="1"/>
</dbReference>
<dbReference type="Gene3D" id="3.30.930.10">
    <property type="entry name" value="Bira Bifunctional Protein, Domain 2"/>
    <property type="match status" value="1"/>
</dbReference>
<dbReference type="HAMAP" id="MF_00013">
    <property type="entry name" value="LipB"/>
    <property type="match status" value="1"/>
</dbReference>
<dbReference type="InterPro" id="IPR045864">
    <property type="entry name" value="aa-tRNA-synth_II/BPL/LPL"/>
</dbReference>
<dbReference type="InterPro" id="IPR004143">
    <property type="entry name" value="BPL_LPL_catalytic"/>
</dbReference>
<dbReference type="InterPro" id="IPR000544">
    <property type="entry name" value="Octanoyltransferase"/>
</dbReference>
<dbReference type="InterPro" id="IPR020605">
    <property type="entry name" value="Octanoyltransferase_CS"/>
</dbReference>
<dbReference type="NCBIfam" id="TIGR00214">
    <property type="entry name" value="lipB"/>
    <property type="match status" value="1"/>
</dbReference>
<dbReference type="NCBIfam" id="NF010922">
    <property type="entry name" value="PRK14342.1"/>
    <property type="match status" value="1"/>
</dbReference>
<dbReference type="NCBIfam" id="NF010923">
    <property type="entry name" value="PRK14343.1"/>
    <property type="match status" value="1"/>
</dbReference>
<dbReference type="NCBIfam" id="NF010925">
    <property type="entry name" value="PRK14345.1"/>
    <property type="match status" value="1"/>
</dbReference>
<dbReference type="PANTHER" id="PTHR10993:SF7">
    <property type="entry name" value="LIPOYLTRANSFERASE 2, MITOCHONDRIAL-RELATED"/>
    <property type="match status" value="1"/>
</dbReference>
<dbReference type="PANTHER" id="PTHR10993">
    <property type="entry name" value="OCTANOYLTRANSFERASE"/>
    <property type="match status" value="1"/>
</dbReference>
<dbReference type="Pfam" id="PF21948">
    <property type="entry name" value="LplA-B_cat"/>
    <property type="match status" value="1"/>
</dbReference>
<dbReference type="PIRSF" id="PIRSF016262">
    <property type="entry name" value="LPLase"/>
    <property type="match status" value="1"/>
</dbReference>
<dbReference type="SUPFAM" id="SSF55681">
    <property type="entry name" value="Class II aaRS and biotin synthetases"/>
    <property type="match status" value="1"/>
</dbReference>
<dbReference type="PROSITE" id="PS51733">
    <property type="entry name" value="BPL_LPL_CATALYTIC"/>
    <property type="match status" value="1"/>
</dbReference>
<dbReference type="PROSITE" id="PS01313">
    <property type="entry name" value="LIPB"/>
    <property type="match status" value="1"/>
</dbReference>
<evidence type="ECO:0000255" key="1">
    <source>
        <dbReference type="HAMAP-Rule" id="MF_00013"/>
    </source>
</evidence>
<evidence type="ECO:0000255" key="2">
    <source>
        <dbReference type="PROSITE-ProRule" id="PRU01067"/>
    </source>
</evidence>
<accession>A1K1U6</accession>
<comment type="function">
    <text evidence="1">Catalyzes the transfer of endogenously produced octanoic acid from octanoyl-acyl-carrier-protein onto the lipoyl domains of lipoate-dependent enzymes. Lipoyl-ACP can also act as a substrate although octanoyl-ACP is likely to be the physiological substrate.</text>
</comment>
<comment type="catalytic activity">
    <reaction evidence="1">
        <text>octanoyl-[ACP] + L-lysyl-[protein] = N(6)-octanoyl-L-lysyl-[protein] + holo-[ACP] + H(+)</text>
        <dbReference type="Rhea" id="RHEA:17665"/>
        <dbReference type="Rhea" id="RHEA-COMP:9636"/>
        <dbReference type="Rhea" id="RHEA-COMP:9685"/>
        <dbReference type="Rhea" id="RHEA-COMP:9752"/>
        <dbReference type="Rhea" id="RHEA-COMP:9928"/>
        <dbReference type="ChEBI" id="CHEBI:15378"/>
        <dbReference type="ChEBI" id="CHEBI:29969"/>
        <dbReference type="ChEBI" id="CHEBI:64479"/>
        <dbReference type="ChEBI" id="CHEBI:78463"/>
        <dbReference type="ChEBI" id="CHEBI:78809"/>
        <dbReference type="EC" id="2.3.1.181"/>
    </reaction>
</comment>
<comment type="pathway">
    <text evidence="1">Protein modification; protein lipoylation via endogenous pathway; protein N(6)-(lipoyl)lysine from octanoyl-[acyl-carrier-protein]: step 1/2.</text>
</comment>
<comment type="subcellular location">
    <subcellularLocation>
        <location evidence="1">Cytoplasm</location>
    </subcellularLocation>
</comment>
<comment type="miscellaneous">
    <text evidence="1">In the reaction, the free carboxyl group of octanoic acid is attached via an amide linkage to the epsilon-amino group of a specific lysine residue of lipoyl domains of lipoate-dependent enzymes.</text>
</comment>
<comment type="similarity">
    <text evidence="1">Belongs to the LipB family.</text>
</comment>
<keyword id="KW-0012">Acyltransferase</keyword>
<keyword id="KW-0963">Cytoplasm</keyword>
<keyword id="KW-1185">Reference proteome</keyword>
<keyword id="KW-0808">Transferase</keyword>
<organism>
    <name type="scientific">Azoarcus sp. (strain BH72)</name>
    <dbReference type="NCBI Taxonomy" id="418699"/>
    <lineage>
        <taxon>Bacteria</taxon>
        <taxon>Pseudomonadati</taxon>
        <taxon>Pseudomonadota</taxon>
        <taxon>Betaproteobacteria</taxon>
        <taxon>Rhodocyclales</taxon>
        <taxon>Zoogloeaceae</taxon>
        <taxon>Azoarcus</taxon>
    </lineage>
</organism>
<reference key="1">
    <citation type="journal article" date="2006" name="Nat. Biotechnol.">
        <title>Complete genome of the mutualistic, N2-fixing grass endophyte Azoarcus sp. strain BH72.</title>
        <authorList>
            <person name="Krause A."/>
            <person name="Ramakumar A."/>
            <person name="Bartels D."/>
            <person name="Battistoni F."/>
            <person name="Bekel T."/>
            <person name="Boch J."/>
            <person name="Boehm M."/>
            <person name="Friedrich F."/>
            <person name="Hurek T."/>
            <person name="Krause L."/>
            <person name="Linke B."/>
            <person name="McHardy A.C."/>
            <person name="Sarkar A."/>
            <person name="Schneiker S."/>
            <person name="Syed A.A."/>
            <person name="Thauer R."/>
            <person name="Vorhoelter F.-J."/>
            <person name="Weidner S."/>
            <person name="Puehler A."/>
            <person name="Reinhold-Hurek B."/>
            <person name="Kaiser O."/>
            <person name="Goesmann A."/>
        </authorList>
    </citation>
    <scope>NUCLEOTIDE SEQUENCE [LARGE SCALE GENOMIC DNA]</scope>
    <source>
        <strain>BH72</strain>
    </source>
</reference>
<protein>
    <recommendedName>
        <fullName evidence="1">Octanoyltransferase</fullName>
        <ecNumber evidence="1">2.3.1.181</ecNumber>
    </recommendedName>
    <alternativeName>
        <fullName evidence="1">Lipoate-protein ligase B</fullName>
    </alternativeName>
    <alternativeName>
        <fullName evidence="1">Lipoyl/octanoyl transferase</fullName>
    </alternativeName>
    <alternativeName>
        <fullName evidence="1">Octanoyl-[acyl-carrier-protein]-protein N-octanoyltransferase</fullName>
    </alternativeName>
</protein>